<organism>
    <name type="scientific">Bos taurus</name>
    <name type="common">Bovine</name>
    <dbReference type="NCBI Taxonomy" id="9913"/>
    <lineage>
        <taxon>Eukaryota</taxon>
        <taxon>Metazoa</taxon>
        <taxon>Chordata</taxon>
        <taxon>Craniata</taxon>
        <taxon>Vertebrata</taxon>
        <taxon>Euteleostomi</taxon>
        <taxon>Mammalia</taxon>
        <taxon>Eutheria</taxon>
        <taxon>Laurasiatheria</taxon>
        <taxon>Artiodactyla</taxon>
        <taxon>Ruminantia</taxon>
        <taxon>Pecora</taxon>
        <taxon>Bovidae</taxon>
        <taxon>Bovinae</taxon>
        <taxon>Bos</taxon>
    </lineage>
</organism>
<gene>
    <name type="primary">PFDN2</name>
</gene>
<comment type="function">
    <text evidence="2">Binds specifically to cytosolic chaperonin (c-CPN) and transfers target proteins to it. Binds to nascent polypeptide chain and promotes folding in an environment in which there are many competing pathways for nonnative proteins.</text>
</comment>
<comment type="subunit">
    <text evidence="1 2">Heterohexamer of two PFD-alpha type and four PFD-beta type subunits. Component of the PAQosome complex which is responsible for the biogenesis of several protein complexes and which consists of R2TP complex members RUVBL1, RUVBL2, RPAP3 and PIH1D1, URI complex members PFDN2, PFDN6, PDRG1, UXT and URI1 as well as ASDURF, POLR2E and DNAAF10/WDR92. Interacts with URI1; the interaction is phosphorylation-dependent and occurs in a growth-dependent manner.</text>
</comment>
<comment type="subcellular location">
    <subcellularLocation>
        <location evidence="2">Nucleus</location>
    </subcellularLocation>
    <subcellularLocation>
        <location evidence="2">Cytoplasm</location>
    </subcellularLocation>
    <subcellularLocation>
        <location evidence="2">Mitochondrion</location>
    </subcellularLocation>
</comment>
<comment type="similarity">
    <text evidence="4">Belongs to the prefoldin subunit beta family.</text>
</comment>
<dbReference type="EMBL" id="BC126786">
    <property type="protein sequence ID" value="AAI26787.1"/>
    <property type="molecule type" value="mRNA"/>
</dbReference>
<dbReference type="RefSeq" id="NP_001073690.1">
    <property type="nucleotide sequence ID" value="NM_001080221.2"/>
</dbReference>
<dbReference type="SMR" id="A1A4P5"/>
<dbReference type="FunCoup" id="A1A4P5">
    <property type="interactions" value="3058"/>
</dbReference>
<dbReference type="STRING" id="9913.ENSBTAP00000026841"/>
<dbReference type="PaxDb" id="9913-ENSBTAP00000026841"/>
<dbReference type="PeptideAtlas" id="A1A4P5"/>
<dbReference type="GeneID" id="404138"/>
<dbReference type="KEGG" id="bta:404138"/>
<dbReference type="CTD" id="5202"/>
<dbReference type="VEuPathDB" id="HostDB:ENSBTAG00000020152"/>
<dbReference type="eggNOG" id="KOG4098">
    <property type="taxonomic scope" value="Eukaryota"/>
</dbReference>
<dbReference type="HOGENOM" id="CLU_113004_0_0_1"/>
<dbReference type="InParanoid" id="A1A4P5"/>
<dbReference type="OMA" id="CFKMIGG"/>
<dbReference type="OrthoDB" id="29646at2759"/>
<dbReference type="TreeFam" id="TF313252"/>
<dbReference type="Proteomes" id="UP000009136">
    <property type="component" value="Chromosome 3"/>
</dbReference>
<dbReference type="Bgee" id="ENSBTAG00000020152">
    <property type="expression patterns" value="Expressed in pons and 104 other cell types or tissues"/>
</dbReference>
<dbReference type="GO" id="GO:0005737">
    <property type="term" value="C:cytoplasm"/>
    <property type="evidence" value="ECO:0000318"/>
    <property type="project" value="GO_Central"/>
</dbReference>
<dbReference type="GO" id="GO:0005829">
    <property type="term" value="C:cytosol"/>
    <property type="evidence" value="ECO:0000304"/>
    <property type="project" value="Reactome"/>
</dbReference>
<dbReference type="GO" id="GO:0005739">
    <property type="term" value="C:mitochondrion"/>
    <property type="evidence" value="ECO:0007669"/>
    <property type="project" value="UniProtKB-SubCell"/>
</dbReference>
<dbReference type="GO" id="GO:0005634">
    <property type="term" value="C:nucleus"/>
    <property type="evidence" value="ECO:0007669"/>
    <property type="project" value="UniProtKB-SubCell"/>
</dbReference>
<dbReference type="GO" id="GO:0016272">
    <property type="term" value="C:prefoldin complex"/>
    <property type="evidence" value="ECO:0007669"/>
    <property type="project" value="InterPro"/>
</dbReference>
<dbReference type="GO" id="GO:0044183">
    <property type="term" value="F:protein folding chaperone"/>
    <property type="evidence" value="ECO:0000318"/>
    <property type="project" value="GO_Central"/>
</dbReference>
<dbReference type="GO" id="GO:0051082">
    <property type="term" value="F:unfolded protein binding"/>
    <property type="evidence" value="ECO:0007669"/>
    <property type="project" value="InterPro"/>
</dbReference>
<dbReference type="GO" id="GO:0006457">
    <property type="term" value="P:protein folding"/>
    <property type="evidence" value="ECO:0000318"/>
    <property type="project" value="GO_Central"/>
</dbReference>
<dbReference type="CDD" id="cd23163">
    <property type="entry name" value="Prefoldin_2"/>
    <property type="match status" value="1"/>
</dbReference>
<dbReference type="FunFam" id="1.10.287.370:FF:000002">
    <property type="entry name" value="Prefoldin subunit 2"/>
    <property type="match status" value="1"/>
</dbReference>
<dbReference type="Gene3D" id="1.10.287.370">
    <property type="match status" value="1"/>
</dbReference>
<dbReference type="InterPro" id="IPR027235">
    <property type="entry name" value="PFD2"/>
</dbReference>
<dbReference type="InterPro" id="IPR002777">
    <property type="entry name" value="PFD_beta-like"/>
</dbReference>
<dbReference type="InterPro" id="IPR009053">
    <property type="entry name" value="Prefoldin"/>
</dbReference>
<dbReference type="PANTHER" id="PTHR13303">
    <property type="entry name" value="PREFOLDIN SUBUNIT 2"/>
    <property type="match status" value="1"/>
</dbReference>
<dbReference type="Pfam" id="PF01920">
    <property type="entry name" value="Prefoldin_2"/>
    <property type="match status" value="1"/>
</dbReference>
<dbReference type="SUPFAM" id="SSF46579">
    <property type="entry name" value="Prefoldin"/>
    <property type="match status" value="1"/>
</dbReference>
<name>PFD2_BOVIN</name>
<protein>
    <recommendedName>
        <fullName>Prefoldin subunit 2</fullName>
    </recommendedName>
</protein>
<accession>A1A4P5</accession>
<sequence>MAENGGRAGKSSGSGTGKGAVSAEQVIAGFNRLRQEQRGLASKAAELEMELNEHSLVIDTLKEVDETRKCYRMVGGVLVERTVKEVLPALENNKEQIQKIIETLTQQLQAKGKELNEFREKHNIRLMGEDEKPAAKENSEGAGAKASSAGVLVS</sequence>
<keyword id="KW-0143">Chaperone</keyword>
<keyword id="KW-0963">Cytoplasm</keyword>
<keyword id="KW-0496">Mitochondrion</keyword>
<keyword id="KW-0539">Nucleus</keyword>
<keyword id="KW-1185">Reference proteome</keyword>
<reference key="1">
    <citation type="submission" date="2006-10" db="EMBL/GenBank/DDBJ databases">
        <authorList>
            <consortium name="NIH - Mammalian Gene Collection (MGC) project"/>
        </authorList>
    </citation>
    <scope>NUCLEOTIDE SEQUENCE [LARGE SCALE MRNA]</scope>
    <source>
        <strain>Hereford</strain>
        <tissue>Thymus</tissue>
    </source>
</reference>
<proteinExistence type="evidence at transcript level"/>
<feature type="chain" id="PRO_0000282857" description="Prefoldin subunit 2">
    <location>
        <begin position="1"/>
        <end position="154"/>
    </location>
</feature>
<feature type="region of interest" description="Disordered" evidence="3">
    <location>
        <begin position="1"/>
        <end position="20"/>
    </location>
</feature>
<feature type="region of interest" description="Disordered" evidence="3">
    <location>
        <begin position="124"/>
        <end position="154"/>
    </location>
</feature>
<feature type="compositionally biased region" description="Gly residues" evidence="3">
    <location>
        <begin position="1"/>
        <end position="18"/>
    </location>
</feature>
<feature type="compositionally biased region" description="Basic and acidic residues" evidence="3">
    <location>
        <begin position="124"/>
        <end position="139"/>
    </location>
</feature>
<feature type="compositionally biased region" description="Low complexity" evidence="3">
    <location>
        <begin position="140"/>
        <end position="154"/>
    </location>
</feature>
<evidence type="ECO:0000250" key="1">
    <source>
        <dbReference type="UniProtKB" id="P40005"/>
    </source>
</evidence>
<evidence type="ECO:0000250" key="2">
    <source>
        <dbReference type="UniProtKB" id="Q9UHV9"/>
    </source>
</evidence>
<evidence type="ECO:0000256" key="3">
    <source>
        <dbReference type="SAM" id="MobiDB-lite"/>
    </source>
</evidence>
<evidence type="ECO:0000305" key="4"/>